<protein>
    <recommendedName>
        <fullName>Putative F-box protein At5g62660</fullName>
    </recommendedName>
</protein>
<name>FB299_ARATH</name>
<feature type="chain" id="PRO_0000283565" description="Putative F-box protein At5g62660">
    <location>
        <begin position="1"/>
        <end position="379"/>
    </location>
</feature>
<feature type="domain" description="F-box" evidence="1">
    <location>
        <begin position="35"/>
        <end position="84"/>
    </location>
</feature>
<evidence type="ECO:0000255" key="1">
    <source>
        <dbReference type="PROSITE-ProRule" id="PRU00080"/>
    </source>
</evidence>
<organism>
    <name type="scientific">Arabidopsis thaliana</name>
    <name type="common">Mouse-ear cress</name>
    <dbReference type="NCBI Taxonomy" id="3702"/>
    <lineage>
        <taxon>Eukaryota</taxon>
        <taxon>Viridiplantae</taxon>
        <taxon>Streptophyta</taxon>
        <taxon>Embryophyta</taxon>
        <taxon>Tracheophyta</taxon>
        <taxon>Spermatophyta</taxon>
        <taxon>Magnoliopsida</taxon>
        <taxon>eudicotyledons</taxon>
        <taxon>Gunneridae</taxon>
        <taxon>Pentapetalae</taxon>
        <taxon>rosids</taxon>
        <taxon>malvids</taxon>
        <taxon>Brassicales</taxon>
        <taxon>Brassicaceae</taxon>
        <taxon>Camelineae</taxon>
        <taxon>Arabidopsis</taxon>
    </lineage>
</organism>
<accession>Q9LV12</accession>
<dbReference type="EMBL" id="AB020751">
    <property type="protein sequence ID" value="BAA97213.1"/>
    <property type="molecule type" value="Genomic_DNA"/>
</dbReference>
<dbReference type="EMBL" id="CP002688">
    <property type="protein sequence ID" value="AED97640.1"/>
    <property type="molecule type" value="Genomic_DNA"/>
</dbReference>
<dbReference type="RefSeq" id="NP_201072.1">
    <property type="nucleotide sequence ID" value="NM_125661.1"/>
</dbReference>
<dbReference type="FunCoup" id="Q9LV12">
    <property type="interactions" value="11"/>
</dbReference>
<dbReference type="PaxDb" id="3702-AT5G62660.1"/>
<dbReference type="ProteomicsDB" id="230863"/>
<dbReference type="EnsemblPlants" id="AT5G62660.1">
    <property type="protein sequence ID" value="AT5G62660.1"/>
    <property type="gene ID" value="AT5G62660"/>
</dbReference>
<dbReference type="GeneID" id="836387"/>
<dbReference type="Gramene" id="AT5G62660.1">
    <property type="protein sequence ID" value="AT5G62660.1"/>
    <property type="gene ID" value="AT5G62660"/>
</dbReference>
<dbReference type="KEGG" id="ath:AT5G62660"/>
<dbReference type="Araport" id="AT5G62660"/>
<dbReference type="TAIR" id="AT5G62660"/>
<dbReference type="HOGENOM" id="CLU_027176_8_2_1"/>
<dbReference type="InParanoid" id="Q9LV12"/>
<dbReference type="OMA" id="RSRYFTN"/>
<dbReference type="PhylomeDB" id="Q9LV12"/>
<dbReference type="PRO" id="PR:Q9LV12"/>
<dbReference type="Proteomes" id="UP000006548">
    <property type="component" value="Chromosome 5"/>
</dbReference>
<dbReference type="ExpressionAtlas" id="Q9LV12">
    <property type="expression patterns" value="baseline and differential"/>
</dbReference>
<dbReference type="CDD" id="cd22157">
    <property type="entry name" value="F-box_AtFBW1-like"/>
    <property type="match status" value="1"/>
</dbReference>
<dbReference type="Gene3D" id="1.20.1280.50">
    <property type="match status" value="1"/>
</dbReference>
<dbReference type="InterPro" id="IPR013187">
    <property type="entry name" value="F-box-assoc_dom_typ3"/>
</dbReference>
<dbReference type="InterPro" id="IPR017451">
    <property type="entry name" value="F-box-assoc_interact_dom"/>
</dbReference>
<dbReference type="InterPro" id="IPR036047">
    <property type="entry name" value="F-box-like_dom_sf"/>
</dbReference>
<dbReference type="InterPro" id="IPR001810">
    <property type="entry name" value="F-box_dom"/>
</dbReference>
<dbReference type="NCBIfam" id="TIGR01640">
    <property type="entry name" value="F_box_assoc_1"/>
    <property type="match status" value="1"/>
</dbReference>
<dbReference type="PANTHER" id="PTHR31111">
    <property type="entry name" value="BNAA05G37150D PROTEIN-RELATED"/>
    <property type="match status" value="1"/>
</dbReference>
<dbReference type="PANTHER" id="PTHR31111:SF37">
    <property type="entry name" value="F-BOX ONLY PROTEIN 8"/>
    <property type="match status" value="1"/>
</dbReference>
<dbReference type="Pfam" id="PF00646">
    <property type="entry name" value="F-box"/>
    <property type="match status" value="1"/>
</dbReference>
<dbReference type="Pfam" id="PF08268">
    <property type="entry name" value="FBA_3"/>
    <property type="match status" value="1"/>
</dbReference>
<dbReference type="SMART" id="SM00256">
    <property type="entry name" value="FBOX"/>
    <property type="match status" value="1"/>
</dbReference>
<dbReference type="SUPFAM" id="SSF81383">
    <property type="entry name" value="F-box domain"/>
    <property type="match status" value="1"/>
</dbReference>
<dbReference type="PROSITE" id="PS50181">
    <property type="entry name" value="FBOX"/>
    <property type="match status" value="1"/>
</dbReference>
<reference key="1">
    <citation type="journal article" date="2000" name="DNA Res.">
        <title>Structural analysis of Arabidopsis thaliana chromosome 5. X. Sequence features of the regions of 3,076,755 bp covered by sixty P1 and TAC clones.</title>
        <authorList>
            <person name="Sato S."/>
            <person name="Nakamura Y."/>
            <person name="Kaneko T."/>
            <person name="Katoh T."/>
            <person name="Asamizu E."/>
            <person name="Kotani H."/>
            <person name="Tabata S."/>
        </authorList>
    </citation>
    <scope>NUCLEOTIDE SEQUENCE [LARGE SCALE GENOMIC DNA]</scope>
    <source>
        <strain>cv. Columbia</strain>
    </source>
</reference>
<reference key="2">
    <citation type="journal article" date="2017" name="Plant J.">
        <title>Araport11: a complete reannotation of the Arabidopsis thaliana reference genome.</title>
        <authorList>
            <person name="Cheng C.Y."/>
            <person name="Krishnakumar V."/>
            <person name="Chan A.P."/>
            <person name="Thibaud-Nissen F."/>
            <person name="Schobel S."/>
            <person name="Town C.D."/>
        </authorList>
    </citation>
    <scope>GENOME REANNOTATION</scope>
    <source>
        <strain>cv. Columbia</strain>
    </source>
</reference>
<gene>
    <name type="ordered locus">At5g62660</name>
    <name type="ORF">MRG21.8</name>
</gene>
<sequence length="379" mass="43364">MRMSAAMFSSFRCKTRSSKVMLRRGRKRRRRIEDALVAPEIPLDLLIEILTKLPAKSLMRFKCVSKLWSSLIRSRFFSNCYLTVKTPRRPPRLYMSLVDHLLCNSLMVCHYPCESVLLSSSSSAESLEQNLTIAGMGGRNMVVLRGLILYVVCRTASIYNPTTRQSVTLPAVKSNILAQKSHWNSLLYFFGYDPVLDQYKVVCTVALFSKRLKRITSEHWVFVLEPGGSWKRIEFDQPHLPTRLGLCVNGVIYYLASTWKRRDIVVSFDVRSEEFSMIQGPLKVSAFSESVGFIEYGGKPAVFDYTMMKQTGLVDLWVLEDAGKWSRKSLVLQPCQMHLVDNDIEFNVEGTTQNGEVILAPETIISPYYILFMTSKRMI</sequence>
<proteinExistence type="predicted"/>
<keyword id="KW-1185">Reference proteome</keyword>